<evidence type="ECO:0000250" key="1">
    <source>
        <dbReference type="UniProtKB" id="P32906"/>
    </source>
</evidence>
<evidence type="ECO:0000250" key="2">
    <source>
        <dbReference type="UniProtKB" id="P45700"/>
    </source>
</evidence>
<evidence type="ECO:0000255" key="3"/>
<evidence type="ECO:0000256" key="4">
    <source>
        <dbReference type="SAM" id="MobiDB-lite"/>
    </source>
</evidence>
<evidence type="ECO:0000269" key="5">
    <source>
    </source>
</evidence>
<evidence type="ECO:0000269" key="6">
    <source>
    </source>
</evidence>
<evidence type="ECO:0000305" key="7"/>
<reference key="1">
    <citation type="journal article" date="1997" name="Nature">
        <title>The nucleotide sequence of Saccharomyces cerevisiae chromosome XII.</title>
        <authorList>
            <person name="Johnston M."/>
            <person name="Hillier L.W."/>
            <person name="Riles L."/>
            <person name="Albermann K."/>
            <person name="Andre B."/>
            <person name="Ansorge W."/>
            <person name="Benes V."/>
            <person name="Brueckner M."/>
            <person name="Delius H."/>
            <person name="Dubois E."/>
            <person name="Duesterhoeft A."/>
            <person name="Entian K.-D."/>
            <person name="Floeth M."/>
            <person name="Goffeau A."/>
            <person name="Hebling U."/>
            <person name="Heumann K."/>
            <person name="Heuss-Neitzel D."/>
            <person name="Hilbert H."/>
            <person name="Hilger F."/>
            <person name="Kleine K."/>
            <person name="Koetter P."/>
            <person name="Louis E.J."/>
            <person name="Messenguy F."/>
            <person name="Mewes H.-W."/>
            <person name="Miosga T."/>
            <person name="Moestl D."/>
            <person name="Mueller-Auer S."/>
            <person name="Nentwich U."/>
            <person name="Obermaier B."/>
            <person name="Piravandi E."/>
            <person name="Pohl T.M."/>
            <person name="Portetelle D."/>
            <person name="Purnelle B."/>
            <person name="Rechmann S."/>
            <person name="Rieger M."/>
            <person name="Rinke M."/>
            <person name="Rose M."/>
            <person name="Scharfe M."/>
            <person name="Scherens B."/>
            <person name="Scholler P."/>
            <person name="Schwager C."/>
            <person name="Schwarz S."/>
            <person name="Underwood A.P."/>
            <person name="Urrestarazu L.A."/>
            <person name="Vandenbol M."/>
            <person name="Verhasselt P."/>
            <person name="Vierendeels F."/>
            <person name="Voet M."/>
            <person name="Volckaert G."/>
            <person name="Voss H."/>
            <person name="Wambutt R."/>
            <person name="Wedler E."/>
            <person name="Wedler H."/>
            <person name="Zimmermann F.K."/>
            <person name="Zollner A."/>
            <person name="Hani J."/>
            <person name="Hoheisel J.D."/>
        </authorList>
    </citation>
    <scope>NUCLEOTIDE SEQUENCE [LARGE SCALE GENOMIC DNA]</scope>
    <source>
        <strain>ATCC 204508 / S288c</strain>
    </source>
</reference>
<reference key="2">
    <citation type="journal article" date="2014" name="G3 (Bethesda)">
        <title>The reference genome sequence of Saccharomyces cerevisiae: Then and now.</title>
        <authorList>
            <person name="Engel S.R."/>
            <person name="Dietrich F.S."/>
            <person name="Fisk D.G."/>
            <person name="Binkley G."/>
            <person name="Balakrishnan R."/>
            <person name="Costanzo M.C."/>
            <person name="Dwight S.S."/>
            <person name="Hitz B.C."/>
            <person name="Karra K."/>
            <person name="Nash R.S."/>
            <person name="Weng S."/>
            <person name="Wong E.D."/>
            <person name="Lloyd P."/>
            <person name="Skrzypek M.S."/>
            <person name="Miyasato S.R."/>
            <person name="Simison M."/>
            <person name="Cherry J.M."/>
        </authorList>
    </citation>
    <scope>GENOME REANNOTATION</scope>
    <source>
        <strain>ATCC 204508 / S288c</strain>
    </source>
</reference>
<reference key="3">
    <citation type="journal article" date="2007" name="Genome Res.">
        <title>Approaching a complete repository of sequence-verified protein-encoding clones for Saccharomyces cerevisiae.</title>
        <authorList>
            <person name="Hu Y."/>
            <person name="Rolfs A."/>
            <person name="Bhullar B."/>
            <person name="Murthy T.V.S."/>
            <person name="Zhu C."/>
            <person name="Berger M.F."/>
            <person name="Camargo A.A."/>
            <person name="Kelley F."/>
            <person name="McCarron S."/>
            <person name="Jepson D."/>
            <person name="Richardson A."/>
            <person name="Raphael J."/>
            <person name="Moreira D."/>
            <person name="Taycher E."/>
            <person name="Zuo D."/>
            <person name="Mohr S."/>
            <person name="Kane M.F."/>
            <person name="Williamson J."/>
            <person name="Simpson A.J.G."/>
            <person name="Bulyk M.L."/>
            <person name="Harlow E."/>
            <person name="Marsischky G."/>
            <person name="Kolodner R.D."/>
            <person name="LaBaer J."/>
        </authorList>
    </citation>
    <scope>NUCLEOTIDE SEQUENCE [GENOMIC DNA]</scope>
    <source>
        <strain>ATCC 204508 / S288c</strain>
    </source>
</reference>
<reference key="4">
    <citation type="journal article" date="2003" name="Nature">
        <title>Global analysis of protein expression in yeast.</title>
        <authorList>
            <person name="Ghaemmaghami S."/>
            <person name="Huh W.-K."/>
            <person name="Bower K."/>
            <person name="Howson R.W."/>
            <person name="Belle A."/>
            <person name="Dephoure N."/>
            <person name="O'Shea E.K."/>
            <person name="Weissman J.S."/>
        </authorList>
    </citation>
    <scope>LEVEL OF PROTEIN EXPRESSION [LARGE SCALE ANALYSIS]</scope>
</reference>
<reference key="5">
    <citation type="journal article" date="2011" name="Biochem. Biophys. Res. Commun.">
        <title>Mnl2, a novel component of the ER associated protein degradation pathway.</title>
        <authorList>
            <person name="Martinez Benitez E."/>
            <person name="Stolz A."/>
            <person name="Becher A."/>
            <person name="Wolf D.H."/>
        </authorList>
    </citation>
    <scope>SUBCELLULAR LOCATION</scope>
    <scope>FUNCTION</scope>
</reference>
<sequence>MSIARLVYSLFRRVRSVLLLFITISLLFYYTFQNEIDILNSYALNDSLPSINNYEHNTEGSSKLDPPDLSSTGSDRIATDKENGNVAVDLSDPATLREKNKYFPLLLKGSSHQIGSNLPISSLLTYKEKYPVLFEYSSPSLTSISQNDVHKIQPAMQLPPDVDMIKQIKDIFMKSWNQEQLLLKSNLRRESTWPIDLIDSLDTLYLCGETKLFQDSVNIIEDFDFRVPPLAMEVIDIPDITTRVLEGLLSAYELSMDKRLLNKAKHVADFILRSFDTPNRIPILKYFWKSDLRNRFPDRTVPSGQLTTMALAFIRLSQLTRLNKYFDAVERVFTTIRQSYNEFDMEFMLPDVVDASGCQLLTQEEIENGAHLKGSSIMKSINENFKFVHCQQLGKFLNPPIDDNSLQEQSQYQAYRINEKTVPILENLFKINDLFQSSYDILDGSSKNANAATMDPSIGSEVEAVDEIIEKRNFKDGTKKDSTKNTVGDKSLIDSQTFLTNSISNIFKFMTFRPMLPKQTENKKFNFLNSILTKSQFMPTTNELDVTIRKSYDVSLYSCRLGGILGLSSRVPHRGGVNTKYILPSSLLEMSEIITESCFMLMEEFDGLLPQKFELDPCTDETNGNCEFNGETKSRMIANGEYETFENDLDVGIKVSNYGKGGNDQKAKRNVLSKDGITETQNIKGDTVGSSKSIAEIDGDEVTQIRRVFTLGKDIKPHITTDDTMGSQWKNHPDWPFWVNKVESRRLLDSNIIESIFYMYRISGEQKWRSMGKQSFGILMQELMELNSGAKGLWQIKEFYENGEKVNNDLPSYWFSRTLKYYLLLFSDGDKVSLDKHILTQGGHIIKKK</sequence>
<feature type="chain" id="PRO_0000247229" description="Putative endoplasmic reticulum mannosidase MNL2">
    <location>
        <begin position="1"/>
        <end position="849"/>
    </location>
</feature>
<feature type="topological domain" description="Cytoplasmic" evidence="3">
    <location>
        <begin position="1"/>
        <end position="12"/>
    </location>
</feature>
<feature type="transmembrane region" description="Helical; Signal-anchor for type II membrane protein" evidence="3">
    <location>
        <begin position="13"/>
        <end position="32"/>
    </location>
</feature>
<feature type="topological domain" description="Lumenal" evidence="3">
    <location>
        <begin position="33"/>
        <end position="849"/>
    </location>
</feature>
<feature type="region of interest" description="Disordered" evidence="4">
    <location>
        <begin position="56"/>
        <end position="79"/>
    </location>
</feature>
<feature type="glycosylation site" description="N-linked (GlcNAc...) asparagine" evidence="3">
    <location>
        <position position="45"/>
    </location>
</feature>
<feature type="disulfide bond" evidence="1">
    <location>
        <begin position="559"/>
        <end position="598"/>
    </location>
</feature>
<gene>
    <name type="primary">MNL2</name>
    <name type="ordered locus">YLR057W</name>
    <name type="ORF">L2153</name>
</gene>
<accession>Q12205</accession>
<accession>D6VY59</accession>
<accession>Q7LGY1</accession>
<comment type="function">
    <text evidence="6">Putative mannosidase involved in glycoprotein quality control since it is involved in the targeting of misfolded glycoproteins for ER-associated protein degradation (ERAD).</text>
</comment>
<comment type="cofactor">
    <cofactor evidence="2">
        <name>Ca(2+)</name>
        <dbReference type="ChEBI" id="CHEBI:29108"/>
    </cofactor>
</comment>
<comment type="pathway">
    <text evidence="1">Protein modification; protein glycosylation.</text>
</comment>
<comment type="subcellular location">
    <subcellularLocation>
        <location evidence="6">Endoplasmic reticulum membrane</location>
        <topology evidence="6">Single-pass type II membrane protein</topology>
    </subcellularLocation>
</comment>
<comment type="miscellaneous">
    <text evidence="5">Present with 71 molecules/cell in log phase SD medium.</text>
</comment>
<comment type="similarity">
    <text evidence="7">Belongs to the glycosyl hydrolase 47 family.</text>
</comment>
<dbReference type="EC" id="3.2.1.-" evidence="1"/>
<dbReference type="EMBL" id="X94607">
    <property type="protein sequence ID" value="CAA64304.1"/>
    <property type="molecule type" value="Genomic_DNA"/>
</dbReference>
<dbReference type="EMBL" id="Z73229">
    <property type="protein sequence ID" value="CAA97587.1"/>
    <property type="molecule type" value="Genomic_DNA"/>
</dbReference>
<dbReference type="EMBL" id="Z73230">
    <property type="protein sequence ID" value="CAA97589.1"/>
    <property type="molecule type" value="Genomic_DNA"/>
</dbReference>
<dbReference type="EMBL" id="AY692557">
    <property type="protein sequence ID" value="AAT92576.1"/>
    <property type="molecule type" value="Genomic_DNA"/>
</dbReference>
<dbReference type="EMBL" id="BK006945">
    <property type="protein sequence ID" value="DAA09375.1"/>
    <property type="molecule type" value="Genomic_DNA"/>
</dbReference>
<dbReference type="PIR" id="S61631">
    <property type="entry name" value="S61631"/>
</dbReference>
<dbReference type="RefSeq" id="NP_013158.1">
    <property type="nucleotide sequence ID" value="NM_001181944.1"/>
</dbReference>
<dbReference type="BioGRID" id="31332">
    <property type="interactions" value="73"/>
</dbReference>
<dbReference type="DIP" id="DIP-8921N"/>
<dbReference type="FunCoup" id="Q12205">
    <property type="interactions" value="157"/>
</dbReference>
<dbReference type="MINT" id="Q12205"/>
<dbReference type="STRING" id="4932.YLR057W"/>
<dbReference type="CAZy" id="GH47">
    <property type="family name" value="Glycoside Hydrolase Family 47"/>
</dbReference>
<dbReference type="GlyCosmos" id="Q12205">
    <property type="glycosylation" value="1 site, No reported glycans"/>
</dbReference>
<dbReference type="GlyGen" id="Q12205">
    <property type="glycosylation" value="1 site"/>
</dbReference>
<dbReference type="iPTMnet" id="Q12205"/>
<dbReference type="PaxDb" id="4932-YLR057W"/>
<dbReference type="PeptideAtlas" id="Q12205"/>
<dbReference type="EnsemblFungi" id="YLR057W_mRNA">
    <property type="protein sequence ID" value="YLR057W"/>
    <property type="gene ID" value="YLR057W"/>
</dbReference>
<dbReference type="GeneID" id="850746"/>
<dbReference type="KEGG" id="sce:YLR057W"/>
<dbReference type="AGR" id="SGD:S000004047"/>
<dbReference type="SGD" id="S000004047">
    <property type="gene designation" value="MNL2"/>
</dbReference>
<dbReference type="VEuPathDB" id="FungiDB:YLR057W"/>
<dbReference type="eggNOG" id="KOG2204">
    <property type="taxonomic scope" value="Eukaryota"/>
</dbReference>
<dbReference type="HOGENOM" id="CLU_022261_0_0_1"/>
<dbReference type="InParanoid" id="Q12205"/>
<dbReference type="OMA" id="YYTFENE"/>
<dbReference type="OrthoDB" id="8118055at2759"/>
<dbReference type="BioCyc" id="YEAST:G3O-32212-MONOMER"/>
<dbReference type="UniPathway" id="UPA00378"/>
<dbReference type="BioGRID-ORCS" id="850746">
    <property type="hits" value="0 hits in 10 CRISPR screens"/>
</dbReference>
<dbReference type="PRO" id="PR:Q12205"/>
<dbReference type="Proteomes" id="UP000002311">
    <property type="component" value="Chromosome XII"/>
</dbReference>
<dbReference type="RNAct" id="Q12205">
    <property type="molecule type" value="protein"/>
</dbReference>
<dbReference type="GO" id="GO:0005783">
    <property type="term" value="C:endoplasmic reticulum"/>
    <property type="evidence" value="ECO:0000314"/>
    <property type="project" value="SGD"/>
</dbReference>
<dbReference type="GO" id="GO:0005789">
    <property type="term" value="C:endoplasmic reticulum membrane"/>
    <property type="evidence" value="ECO:0007669"/>
    <property type="project" value="UniProtKB-SubCell"/>
</dbReference>
<dbReference type="GO" id="GO:0016020">
    <property type="term" value="C:membrane"/>
    <property type="evidence" value="ECO:0000318"/>
    <property type="project" value="GO_Central"/>
</dbReference>
<dbReference type="GO" id="GO:0005509">
    <property type="term" value="F:calcium ion binding"/>
    <property type="evidence" value="ECO:0007669"/>
    <property type="project" value="InterPro"/>
</dbReference>
<dbReference type="GO" id="GO:0004571">
    <property type="term" value="F:mannosyl-oligosaccharide 1,2-alpha-mannosidase activity"/>
    <property type="evidence" value="ECO:0000318"/>
    <property type="project" value="GO_Central"/>
</dbReference>
<dbReference type="GO" id="GO:0005975">
    <property type="term" value="P:carbohydrate metabolic process"/>
    <property type="evidence" value="ECO:0007669"/>
    <property type="project" value="InterPro"/>
</dbReference>
<dbReference type="GO" id="GO:0036503">
    <property type="term" value="P:ERAD pathway"/>
    <property type="evidence" value="ECO:0000316"/>
    <property type="project" value="SGD"/>
</dbReference>
<dbReference type="GO" id="GO:0006486">
    <property type="term" value="P:protein glycosylation"/>
    <property type="evidence" value="ECO:0007669"/>
    <property type="project" value="UniProtKB-UniPathway"/>
</dbReference>
<dbReference type="Gene3D" id="1.50.10.10">
    <property type="match status" value="2"/>
</dbReference>
<dbReference type="InterPro" id="IPR012341">
    <property type="entry name" value="6hp_glycosidase-like_sf"/>
</dbReference>
<dbReference type="InterPro" id="IPR001382">
    <property type="entry name" value="Glyco_hydro_47"/>
</dbReference>
<dbReference type="InterPro" id="IPR050749">
    <property type="entry name" value="Glycosyl_Hydrolase_47"/>
</dbReference>
<dbReference type="InterPro" id="IPR036026">
    <property type="entry name" value="Seven-hairpin_glycosidases"/>
</dbReference>
<dbReference type="PANTHER" id="PTHR11742:SF103">
    <property type="entry name" value="ENDOPLASMIC RETICULUM MANNOSIDASE MNL2-RELATED"/>
    <property type="match status" value="1"/>
</dbReference>
<dbReference type="PANTHER" id="PTHR11742">
    <property type="entry name" value="MANNOSYL-OLIGOSACCHARIDE ALPHA-1,2-MANNOSIDASE-RELATED"/>
    <property type="match status" value="1"/>
</dbReference>
<dbReference type="Pfam" id="PF01532">
    <property type="entry name" value="Glyco_hydro_47"/>
    <property type="match status" value="1"/>
</dbReference>
<dbReference type="PRINTS" id="PR00747">
    <property type="entry name" value="GLYHDRLASE47"/>
</dbReference>
<dbReference type="SUPFAM" id="SSF48225">
    <property type="entry name" value="Seven-hairpin glycosidases"/>
    <property type="match status" value="1"/>
</dbReference>
<protein>
    <recommendedName>
        <fullName>Putative endoplasmic reticulum mannosidase MNL2</fullName>
        <ecNumber evidence="1">3.2.1.-</ecNumber>
    </recommendedName>
    <alternativeName>
        <fullName>Mannosidase-like protein 2</fullName>
    </alternativeName>
</protein>
<keyword id="KW-1015">Disulfide bond</keyword>
<keyword id="KW-0256">Endoplasmic reticulum</keyword>
<keyword id="KW-0325">Glycoprotein</keyword>
<keyword id="KW-0326">Glycosidase</keyword>
<keyword id="KW-0378">Hydrolase</keyword>
<keyword id="KW-0472">Membrane</keyword>
<keyword id="KW-1185">Reference proteome</keyword>
<keyword id="KW-0735">Signal-anchor</keyword>
<keyword id="KW-0812">Transmembrane</keyword>
<keyword id="KW-1133">Transmembrane helix</keyword>
<name>MNL2_YEAST</name>
<proteinExistence type="evidence at protein level"/>
<organism>
    <name type="scientific">Saccharomyces cerevisiae (strain ATCC 204508 / S288c)</name>
    <name type="common">Baker's yeast</name>
    <dbReference type="NCBI Taxonomy" id="559292"/>
    <lineage>
        <taxon>Eukaryota</taxon>
        <taxon>Fungi</taxon>
        <taxon>Dikarya</taxon>
        <taxon>Ascomycota</taxon>
        <taxon>Saccharomycotina</taxon>
        <taxon>Saccharomycetes</taxon>
        <taxon>Saccharomycetales</taxon>
        <taxon>Saccharomycetaceae</taxon>
        <taxon>Saccharomyces</taxon>
    </lineage>
</organism>